<organism>
    <name type="scientific">Blochmanniella floridana</name>
    <dbReference type="NCBI Taxonomy" id="203907"/>
    <lineage>
        <taxon>Bacteria</taxon>
        <taxon>Pseudomonadati</taxon>
        <taxon>Pseudomonadota</taxon>
        <taxon>Gammaproteobacteria</taxon>
        <taxon>Enterobacterales</taxon>
        <taxon>Enterobacteriaceae</taxon>
        <taxon>ant endosymbionts</taxon>
        <taxon>Candidatus Blochmanniella</taxon>
    </lineage>
</organism>
<sequence>MIRNQYYGTGRRKSASARVFLRFGNGDIVINNLSLDKYFPKDNFQIIIKKPLEVTNVLNILDAYITVIGGGVSGQAGAISHGITRALLQYNAEFKSVLRATGLMTRDSRMVERKKVGLRKARRSPQFSKR</sequence>
<feature type="chain" id="PRO_0000111339" description="Small ribosomal subunit protein uS9">
    <location>
        <begin position="1"/>
        <end position="130"/>
    </location>
</feature>
<gene>
    <name evidence="1" type="primary">rpsI</name>
    <name type="ordered locus">Bfl050</name>
</gene>
<name>RS9_BLOFL</name>
<dbReference type="EMBL" id="BX248583">
    <property type="protein sequence ID" value="CAD83577.1"/>
    <property type="molecule type" value="Genomic_DNA"/>
</dbReference>
<dbReference type="SMR" id="Q7VQR6"/>
<dbReference type="STRING" id="203907.Bfl050"/>
<dbReference type="KEGG" id="bfl:Bfl050"/>
<dbReference type="eggNOG" id="COG0103">
    <property type="taxonomic scope" value="Bacteria"/>
</dbReference>
<dbReference type="HOGENOM" id="CLU_046483_2_1_6"/>
<dbReference type="OrthoDB" id="9803965at2"/>
<dbReference type="Proteomes" id="UP000002192">
    <property type="component" value="Chromosome"/>
</dbReference>
<dbReference type="GO" id="GO:0022627">
    <property type="term" value="C:cytosolic small ribosomal subunit"/>
    <property type="evidence" value="ECO:0007669"/>
    <property type="project" value="TreeGrafter"/>
</dbReference>
<dbReference type="GO" id="GO:0003723">
    <property type="term" value="F:RNA binding"/>
    <property type="evidence" value="ECO:0007669"/>
    <property type="project" value="TreeGrafter"/>
</dbReference>
<dbReference type="GO" id="GO:0003735">
    <property type="term" value="F:structural constituent of ribosome"/>
    <property type="evidence" value="ECO:0007669"/>
    <property type="project" value="InterPro"/>
</dbReference>
<dbReference type="GO" id="GO:0006412">
    <property type="term" value="P:translation"/>
    <property type="evidence" value="ECO:0007669"/>
    <property type="project" value="UniProtKB-UniRule"/>
</dbReference>
<dbReference type="FunFam" id="3.30.230.10:FF:000001">
    <property type="entry name" value="30S ribosomal protein S9"/>
    <property type="match status" value="1"/>
</dbReference>
<dbReference type="Gene3D" id="3.30.230.10">
    <property type="match status" value="1"/>
</dbReference>
<dbReference type="HAMAP" id="MF_00532_B">
    <property type="entry name" value="Ribosomal_uS9_B"/>
    <property type="match status" value="1"/>
</dbReference>
<dbReference type="InterPro" id="IPR020568">
    <property type="entry name" value="Ribosomal_Su5_D2-typ_SF"/>
</dbReference>
<dbReference type="InterPro" id="IPR000754">
    <property type="entry name" value="Ribosomal_uS9"/>
</dbReference>
<dbReference type="InterPro" id="IPR023035">
    <property type="entry name" value="Ribosomal_uS9_bac/plastid"/>
</dbReference>
<dbReference type="InterPro" id="IPR020574">
    <property type="entry name" value="Ribosomal_uS9_CS"/>
</dbReference>
<dbReference type="InterPro" id="IPR014721">
    <property type="entry name" value="Ribsml_uS5_D2-typ_fold_subgr"/>
</dbReference>
<dbReference type="NCBIfam" id="NF001099">
    <property type="entry name" value="PRK00132.1"/>
    <property type="match status" value="1"/>
</dbReference>
<dbReference type="PANTHER" id="PTHR21569">
    <property type="entry name" value="RIBOSOMAL PROTEIN S9"/>
    <property type="match status" value="1"/>
</dbReference>
<dbReference type="PANTHER" id="PTHR21569:SF1">
    <property type="entry name" value="SMALL RIBOSOMAL SUBUNIT PROTEIN US9M"/>
    <property type="match status" value="1"/>
</dbReference>
<dbReference type="Pfam" id="PF00380">
    <property type="entry name" value="Ribosomal_S9"/>
    <property type="match status" value="1"/>
</dbReference>
<dbReference type="SUPFAM" id="SSF54211">
    <property type="entry name" value="Ribosomal protein S5 domain 2-like"/>
    <property type="match status" value="1"/>
</dbReference>
<dbReference type="PROSITE" id="PS00360">
    <property type="entry name" value="RIBOSOMAL_S9"/>
    <property type="match status" value="1"/>
</dbReference>
<proteinExistence type="inferred from homology"/>
<keyword id="KW-1185">Reference proteome</keyword>
<keyword id="KW-0687">Ribonucleoprotein</keyword>
<keyword id="KW-0689">Ribosomal protein</keyword>
<reference key="1">
    <citation type="journal article" date="2003" name="Proc. Natl. Acad. Sci. U.S.A.">
        <title>The genome sequence of Blochmannia floridanus: comparative analysis of reduced genomes.</title>
        <authorList>
            <person name="Gil R."/>
            <person name="Silva F.J."/>
            <person name="Zientz E."/>
            <person name="Delmotte F."/>
            <person name="Gonzalez-Candelas F."/>
            <person name="Latorre A."/>
            <person name="Rausell C."/>
            <person name="Kamerbeek J."/>
            <person name="Gadau J."/>
            <person name="Hoelldobler B."/>
            <person name="van Ham R.C.H.J."/>
            <person name="Gross R."/>
            <person name="Moya A."/>
        </authorList>
    </citation>
    <scope>NUCLEOTIDE SEQUENCE [LARGE SCALE GENOMIC DNA]</scope>
</reference>
<protein>
    <recommendedName>
        <fullName evidence="1">Small ribosomal subunit protein uS9</fullName>
    </recommendedName>
    <alternativeName>
        <fullName evidence="2">30S ribosomal protein S9</fullName>
    </alternativeName>
</protein>
<evidence type="ECO:0000255" key="1">
    <source>
        <dbReference type="HAMAP-Rule" id="MF_00532"/>
    </source>
</evidence>
<evidence type="ECO:0000305" key="2"/>
<accession>Q7VQR6</accession>
<comment type="similarity">
    <text evidence="1">Belongs to the universal ribosomal protein uS9 family.</text>
</comment>